<gene>
    <name evidence="1" type="primary">aroD</name>
    <name type="ordered locus">ECIAI1_1746</name>
</gene>
<feature type="chain" id="PRO_1000189572" description="3-dehydroquinate dehydratase">
    <location>
        <begin position="1"/>
        <end position="252"/>
    </location>
</feature>
<feature type="active site" description="Proton donor/acceptor" evidence="1">
    <location>
        <position position="143"/>
    </location>
</feature>
<feature type="active site" description="Schiff-base intermediate with substrate" evidence="1">
    <location>
        <position position="170"/>
    </location>
</feature>
<feature type="binding site" evidence="1">
    <location>
        <position position="21"/>
    </location>
    <ligand>
        <name>3-dehydroquinate</name>
        <dbReference type="ChEBI" id="CHEBI:32364"/>
    </ligand>
</feature>
<feature type="binding site" evidence="1">
    <location>
        <begin position="46"/>
        <end position="48"/>
    </location>
    <ligand>
        <name>3-dehydroquinate</name>
        <dbReference type="ChEBI" id="CHEBI:32364"/>
    </ligand>
</feature>
<feature type="binding site" evidence="1">
    <location>
        <position position="82"/>
    </location>
    <ligand>
        <name>3-dehydroquinate</name>
        <dbReference type="ChEBI" id="CHEBI:32364"/>
    </ligand>
</feature>
<feature type="binding site" evidence="1">
    <location>
        <position position="213"/>
    </location>
    <ligand>
        <name>3-dehydroquinate</name>
        <dbReference type="ChEBI" id="CHEBI:32364"/>
    </ligand>
</feature>
<feature type="binding site" evidence="1">
    <location>
        <position position="232"/>
    </location>
    <ligand>
        <name>3-dehydroquinate</name>
        <dbReference type="ChEBI" id="CHEBI:32364"/>
    </ligand>
</feature>
<feature type="binding site" evidence="1">
    <location>
        <position position="236"/>
    </location>
    <ligand>
        <name>3-dehydroquinate</name>
        <dbReference type="ChEBI" id="CHEBI:32364"/>
    </ligand>
</feature>
<keyword id="KW-0028">Amino-acid biosynthesis</keyword>
<keyword id="KW-0057">Aromatic amino acid biosynthesis</keyword>
<keyword id="KW-0456">Lyase</keyword>
<keyword id="KW-0704">Schiff base</keyword>
<reference key="1">
    <citation type="journal article" date="2009" name="PLoS Genet.">
        <title>Organised genome dynamics in the Escherichia coli species results in highly diverse adaptive paths.</title>
        <authorList>
            <person name="Touchon M."/>
            <person name="Hoede C."/>
            <person name="Tenaillon O."/>
            <person name="Barbe V."/>
            <person name="Baeriswyl S."/>
            <person name="Bidet P."/>
            <person name="Bingen E."/>
            <person name="Bonacorsi S."/>
            <person name="Bouchier C."/>
            <person name="Bouvet O."/>
            <person name="Calteau A."/>
            <person name="Chiapello H."/>
            <person name="Clermont O."/>
            <person name="Cruveiller S."/>
            <person name="Danchin A."/>
            <person name="Diard M."/>
            <person name="Dossat C."/>
            <person name="Karoui M.E."/>
            <person name="Frapy E."/>
            <person name="Garry L."/>
            <person name="Ghigo J.M."/>
            <person name="Gilles A.M."/>
            <person name="Johnson J."/>
            <person name="Le Bouguenec C."/>
            <person name="Lescat M."/>
            <person name="Mangenot S."/>
            <person name="Martinez-Jehanne V."/>
            <person name="Matic I."/>
            <person name="Nassif X."/>
            <person name="Oztas S."/>
            <person name="Petit M.A."/>
            <person name="Pichon C."/>
            <person name="Rouy Z."/>
            <person name="Ruf C.S."/>
            <person name="Schneider D."/>
            <person name="Tourret J."/>
            <person name="Vacherie B."/>
            <person name="Vallenet D."/>
            <person name="Medigue C."/>
            <person name="Rocha E.P.C."/>
            <person name="Denamur E."/>
        </authorList>
    </citation>
    <scope>NUCLEOTIDE SEQUENCE [LARGE SCALE GENOMIC DNA]</scope>
    <source>
        <strain>IAI1</strain>
    </source>
</reference>
<organism>
    <name type="scientific">Escherichia coli O8 (strain IAI1)</name>
    <dbReference type="NCBI Taxonomy" id="585034"/>
    <lineage>
        <taxon>Bacteria</taxon>
        <taxon>Pseudomonadati</taxon>
        <taxon>Pseudomonadota</taxon>
        <taxon>Gammaproteobacteria</taxon>
        <taxon>Enterobacterales</taxon>
        <taxon>Enterobacteriaceae</taxon>
        <taxon>Escherichia</taxon>
    </lineage>
</organism>
<proteinExistence type="inferred from homology"/>
<protein>
    <recommendedName>
        <fullName evidence="1">3-dehydroquinate dehydratase</fullName>
        <shortName evidence="1">3-dehydroquinase</shortName>
        <ecNumber evidence="1">4.2.1.10</ecNumber>
    </recommendedName>
    <alternativeName>
        <fullName evidence="1">Type I DHQase</fullName>
    </alternativeName>
    <alternativeName>
        <fullName evidence="1">Type I dehydroquinase</fullName>
        <shortName evidence="1">DHQ1</shortName>
    </alternativeName>
</protein>
<dbReference type="EC" id="4.2.1.10" evidence="1"/>
<dbReference type="EMBL" id="CU928160">
    <property type="protein sequence ID" value="CAQ98603.1"/>
    <property type="molecule type" value="Genomic_DNA"/>
</dbReference>
<dbReference type="RefSeq" id="WP_000860173.1">
    <property type="nucleotide sequence ID" value="NC_011741.1"/>
</dbReference>
<dbReference type="SMR" id="B7M0P9"/>
<dbReference type="KEGG" id="ecr:ECIAI1_1746"/>
<dbReference type="HOGENOM" id="CLU_064444_0_0_6"/>
<dbReference type="UniPathway" id="UPA00053">
    <property type="reaction ID" value="UER00086"/>
</dbReference>
<dbReference type="GO" id="GO:0003855">
    <property type="term" value="F:3-dehydroquinate dehydratase activity"/>
    <property type="evidence" value="ECO:0007669"/>
    <property type="project" value="UniProtKB-UniRule"/>
</dbReference>
<dbReference type="GO" id="GO:0046279">
    <property type="term" value="P:3,4-dihydroxybenzoate biosynthetic process"/>
    <property type="evidence" value="ECO:0007669"/>
    <property type="project" value="TreeGrafter"/>
</dbReference>
<dbReference type="GO" id="GO:0008652">
    <property type="term" value="P:amino acid biosynthetic process"/>
    <property type="evidence" value="ECO:0007669"/>
    <property type="project" value="UniProtKB-KW"/>
</dbReference>
<dbReference type="GO" id="GO:0009073">
    <property type="term" value="P:aromatic amino acid family biosynthetic process"/>
    <property type="evidence" value="ECO:0007669"/>
    <property type="project" value="UniProtKB-KW"/>
</dbReference>
<dbReference type="GO" id="GO:0009423">
    <property type="term" value="P:chorismate biosynthetic process"/>
    <property type="evidence" value="ECO:0007669"/>
    <property type="project" value="UniProtKB-UniRule"/>
</dbReference>
<dbReference type="CDD" id="cd00502">
    <property type="entry name" value="DHQase_I"/>
    <property type="match status" value="1"/>
</dbReference>
<dbReference type="FunFam" id="3.20.20.70:FF:000047">
    <property type="entry name" value="3-dehydroquinate dehydratase"/>
    <property type="match status" value="1"/>
</dbReference>
<dbReference type="Gene3D" id="3.20.20.70">
    <property type="entry name" value="Aldolase class I"/>
    <property type="match status" value="1"/>
</dbReference>
<dbReference type="HAMAP" id="MF_00214">
    <property type="entry name" value="AroD"/>
    <property type="match status" value="1"/>
</dbReference>
<dbReference type="InterPro" id="IPR018508">
    <property type="entry name" value="3-dehydroquinate_DH_AS"/>
</dbReference>
<dbReference type="InterPro" id="IPR013785">
    <property type="entry name" value="Aldolase_TIM"/>
</dbReference>
<dbReference type="InterPro" id="IPR001381">
    <property type="entry name" value="DHquinase_I"/>
</dbReference>
<dbReference type="InterPro" id="IPR050146">
    <property type="entry name" value="Type-I_3-dehydroquinase"/>
</dbReference>
<dbReference type="NCBIfam" id="TIGR01093">
    <property type="entry name" value="aroD"/>
    <property type="match status" value="1"/>
</dbReference>
<dbReference type="PANTHER" id="PTHR43699">
    <property type="entry name" value="3-DEHYDROQUINATE DEHYDRATASE"/>
    <property type="match status" value="1"/>
</dbReference>
<dbReference type="PANTHER" id="PTHR43699:SF1">
    <property type="entry name" value="3-DEHYDROQUINATE DEHYDRATASE"/>
    <property type="match status" value="1"/>
</dbReference>
<dbReference type="Pfam" id="PF01487">
    <property type="entry name" value="DHquinase_I"/>
    <property type="match status" value="1"/>
</dbReference>
<dbReference type="SUPFAM" id="SSF51569">
    <property type="entry name" value="Aldolase"/>
    <property type="match status" value="1"/>
</dbReference>
<dbReference type="PROSITE" id="PS01028">
    <property type="entry name" value="DEHYDROQUINASE_I"/>
    <property type="match status" value="1"/>
</dbReference>
<accession>B7M0P9</accession>
<evidence type="ECO:0000255" key="1">
    <source>
        <dbReference type="HAMAP-Rule" id="MF_00214"/>
    </source>
</evidence>
<name>AROD_ECO8A</name>
<sequence length="252" mass="27574">MKTVTVKDLVIGTGAPKIIVSLMAKDIARVKSEALAYREADFDILEWRVDHFADHSNVESVMAAAKILRETMPEKPLLFTFRSAKEGGEQAISTEAYIALNRAAIDSGLVDMIDLELFTGDDQVKETVAYAHAHDVKVVMSNHDFHKTPEAEEIIARLRKMQSFDADIPKIALMPQSTSDVLTLLTATLEMQEQYADRPIITMSMAKTGVISRLAGEVFGSAATFGAVKKASAPGQISVNDLRTVLTILHQA</sequence>
<comment type="function">
    <text evidence="1">Involved in the third step of the chorismate pathway, which leads to the biosynthesis of aromatic amino acids. Catalyzes the cis-dehydration of 3-dehydroquinate (DHQ) and introduces the first double bond of the aromatic ring to yield 3-dehydroshikimate.</text>
</comment>
<comment type="catalytic activity">
    <reaction evidence="1">
        <text>3-dehydroquinate = 3-dehydroshikimate + H2O</text>
        <dbReference type="Rhea" id="RHEA:21096"/>
        <dbReference type="ChEBI" id="CHEBI:15377"/>
        <dbReference type="ChEBI" id="CHEBI:16630"/>
        <dbReference type="ChEBI" id="CHEBI:32364"/>
        <dbReference type="EC" id="4.2.1.10"/>
    </reaction>
</comment>
<comment type="pathway">
    <text evidence="1">Metabolic intermediate biosynthesis; chorismate biosynthesis; chorismate from D-erythrose 4-phosphate and phosphoenolpyruvate: step 3/7.</text>
</comment>
<comment type="subunit">
    <text evidence="1">Homodimer.</text>
</comment>
<comment type="similarity">
    <text evidence="1">Belongs to the type-I 3-dehydroquinase family.</text>
</comment>